<keyword id="KW-0167">Capsid protein</keyword>
<keyword id="KW-0175">Coiled coil</keyword>
<keyword id="KW-0348">Hemagglutinin</keyword>
<keyword id="KW-1032">Host cell membrane</keyword>
<keyword id="KW-1038">Host endoplasmic reticulum</keyword>
<keyword id="KW-1043">Host membrane</keyword>
<keyword id="KW-0945">Host-virus interaction</keyword>
<keyword id="KW-0472">Membrane</keyword>
<keyword id="KW-1152">Outer capsid protein</keyword>
<keyword id="KW-1161">Viral attachment to host cell</keyword>
<keyword id="KW-1162">Viral penetration into host cytoplasm</keyword>
<keyword id="KW-1173">Viral penetration via permeabilization of host membrane</keyword>
<keyword id="KW-0946">Virion</keyword>
<keyword id="KW-1160">Virus entry into host cell</keyword>
<evidence type="ECO:0000250" key="1"/>
<evidence type="ECO:0000255" key="2">
    <source>
        <dbReference type="HAMAP-Rule" id="MF_04125"/>
    </source>
</evidence>
<comment type="function">
    <molecule>Outer capsid protein VP4</molecule>
    <text evidence="2">Spike-forming protein that mediates virion attachment to the host epithelial cell receptors and plays a major role in cell penetration, determination of host range restriction and virulence. Rotavirus attachment and entry into the host cell probably involves multiple sequential contacts between the outer capsid proteins VP4 and VP7, and the cell receptors. It is subsequently lost, together with VP7, following virus entry into the host cell. Following entry into the host cell, low intracellular or intravesicular Ca(2+) concentration probably causes the calcium-stabilized VP7 trimers to dissociate from the virion. This step is probably necessary for the membrane-disrupting entry step and the release of VP4, which is locked onto the virion by VP7.</text>
</comment>
<comment type="function">
    <molecule>Outer capsid protein VP5*</molecule>
    <text evidence="2">Forms the spike 'foot' and 'body' and acts as a membrane permeabilization protein that mediates release of viral particles from endosomal compartments into the cytoplasm. During entry, the part of VP5* that protrudes from the virus folds back on itself and reorganizes from a local dimer to a trimer. This reorganization may be linked to membrane penetration.</text>
</comment>
<comment type="function">
    <molecule>Outer capsid protein VP8*</molecule>
    <text evidence="2">Forms the head of the spikes and mediates the recognition of specific host cell surface glycans. It is the viral hemagglutinin and an important target of neutralizing antibodies.</text>
</comment>
<comment type="subunit">
    <molecule>Outer capsid protein VP4</molecule>
    <text evidence="2">Homotrimer. VP4 adopts a dimeric appearance above the capsid surface, while forming a trimeric base anchored inside the capsid layer. Only hints of the third molecule are observed above the capsid surface. It probably performs a series of molecular rearrangements during viral entry. Prior to trypsin cleavage, it is flexible. The priming trypsin cleavage triggers its rearrangement into rigid spikes with approximate two-fold symmetry of their protruding parts. After an unknown second triggering event, cleaved VP4 may undergo another rearrangement, in which two VP5* subunits fold back on themselves and join a third subunit to form a tightly associated trimer, shaped like a folded umbrella. Interacts with VP6. Interacts with VP7.</text>
</comment>
<comment type="subunit">
    <molecule>Outer capsid protein VP5*</molecule>
    <text evidence="2">Homotrimer. The trimer is coiled-coil stabilized by its C-terminus, however, its N-terminus, known as antigen domain or 'body', seems to be flexible allowing it to self-associate either as a dimer or a trimer.</text>
</comment>
<comment type="subcellular location">
    <molecule>Outer capsid protein VP4</molecule>
    <subcellularLocation>
        <location evidence="2">Virion</location>
    </subcellularLocation>
    <subcellularLocation>
        <location evidence="2">Host rough endoplasmic reticulum</location>
    </subcellularLocation>
    <subcellularLocation>
        <location evidence="2">Host cell membrane</location>
    </subcellularLocation>
    <subcellularLocation>
        <location evidence="2">Host endoplasmic reticulum-Golgi intermediate compartment</location>
    </subcellularLocation>
    <text evidence="2">The outer layer contains 180 copies of VP4, grouped as 60 dimers. Immature double-layered particles assembled in the cytoplasm bud across the membrane of the endoplasmic reticulum, acquiring during this process a transient lipid membrane that is modified with the ER resident viral glycoproteins NSP4 and VP7; these enveloped particles also contain VP4. As the particles move towards the interior of the ER cisternae, the transient lipid membrane and the non-structural protein NSP4 are lost, while the virus surface proteins VP4 and VP7 rearrange to form the outermost virus protein layer, yielding mature infectious triple-layered particles.</text>
</comment>
<comment type="subcellular location">
    <molecule>Outer capsid protein VP8*</molecule>
    <subcellularLocation>
        <location evidence="2">Virion</location>
    </subcellularLocation>
    <text evidence="2">Outer capsid protein.</text>
</comment>
<comment type="subcellular location">
    <molecule>Outer capsid protein VP5*</molecule>
    <subcellularLocation>
        <location evidence="2">Virion</location>
    </subcellularLocation>
    <text evidence="2">Outer capsid protein.</text>
</comment>
<comment type="domain">
    <molecule>Outer capsid protein VP4</molecule>
    <text evidence="2">The VP4 spike is divided into a foot, a stalk and body, and a head.</text>
</comment>
<comment type="PTM">
    <molecule>Outer capsid protein VP4</molecule>
    <text evidence="2">Proteolytic cleavage by trypsin results in activation of VP4 functions and greatly increases infectivity. The penetration into the host cell is dependent on trypsin treatment of VP4. It produces two peptides, VP5* and VP8* that remain associated with the virion. Cleavage of VP4 by trypsin probably occurs in vivo in the lumen of the intestine prior to infection of enterocytes. Trypsin seems to be incorporated into the three-layered viral particles but remains inactive as long as the viral outer capsid is intact and would only be activated upon the solubilization of the latter.</text>
</comment>
<comment type="similarity">
    <text evidence="2">Belongs to the rotavirus VP4 family.</text>
</comment>
<name>VP4_ROTBS</name>
<dbReference type="EMBL" id="U26551">
    <property type="protein sequence ID" value="AAB01672.1"/>
    <property type="molecule type" value="Genomic_DNA"/>
</dbReference>
<dbReference type="SMR" id="Q65525"/>
<dbReference type="GO" id="GO:0044172">
    <property type="term" value="C:host cell endoplasmic reticulum-Golgi intermediate compartment"/>
    <property type="evidence" value="ECO:0007669"/>
    <property type="project" value="UniProtKB-SubCell"/>
</dbReference>
<dbReference type="GO" id="GO:0020002">
    <property type="term" value="C:host cell plasma membrane"/>
    <property type="evidence" value="ECO:0007669"/>
    <property type="project" value="UniProtKB-SubCell"/>
</dbReference>
<dbReference type="GO" id="GO:0044168">
    <property type="term" value="C:host cell rough endoplasmic reticulum"/>
    <property type="evidence" value="ECO:0007669"/>
    <property type="project" value="UniProtKB-SubCell"/>
</dbReference>
<dbReference type="GO" id="GO:0016020">
    <property type="term" value="C:membrane"/>
    <property type="evidence" value="ECO:0007669"/>
    <property type="project" value="UniProtKB-KW"/>
</dbReference>
<dbReference type="GO" id="GO:0039624">
    <property type="term" value="C:viral outer capsid"/>
    <property type="evidence" value="ECO:0007669"/>
    <property type="project" value="UniProtKB-UniRule"/>
</dbReference>
<dbReference type="GO" id="GO:0039665">
    <property type="term" value="P:permeabilization of host organelle membrane involved in viral entry into host cell"/>
    <property type="evidence" value="ECO:0007669"/>
    <property type="project" value="UniProtKB-UniRule"/>
</dbReference>
<dbReference type="GO" id="GO:0019062">
    <property type="term" value="P:virion attachment to host cell"/>
    <property type="evidence" value="ECO:0007669"/>
    <property type="project" value="UniProtKB-UniRule"/>
</dbReference>
<dbReference type="Gene3D" id="1.20.5.170">
    <property type="match status" value="1"/>
</dbReference>
<dbReference type="HAMAP" id="MF_04125">
    <property type="entry name" value="Rota_VP4"/>
    <property type="match status" value="1"/>
</dbReference>
<dbReference type="InterPro" id="IPR042546">
    <property type="entry name" value="Rota_A_VP4"/>
</dbReference>
<dbReference type="InterPro" id="IPR035330">
    <property type="entry name" value="Rota_VP4_MID"/>
</dbReference>
<dbReference type="InterPro" id="IPR038017">
    <property type="entry name" value="Rota_VP4_MID_sf"/>
</dbReference>
<dbReference type="InterPro" id="IPR035329">
    <property type="entry name" value="VP4_helical"/>
</dbReference>
<dbReference type="Pfam" id="PF17477">
    <property type="entry name" value="Rota_VP4_MID"/>
    <property type="match status" value="1"/>
</dbReference>
<dbReference type="Pfam" id="PF17478">
    <property type="entry name" value="VP4_helical"/>
    <property type="match status" value="1"/>
</dbReference>
<dbReference type="SUPFAM" id="SSF111379">
    <property type="entry name" value="VP4 membrane interaction domain"/>
    <property type="match status" value="1"/>
</dbReference>
<organismHost>
    <name type="scientific">Bos taurus</name>
    <name type="common">Bovine</name>
    <dbReference type="NCBI Taxonomy" id="9913"/>
</organismHost>
<reference key="1">
    <citation type="submission" date="1995-05" db="EMBL/GenBank/DDBJ databases">
        <title>Sequence analysis of VP3 and VP4 genes of a bovine group C rotavirus: molecular evidence for a new P type.</title>
        <authorList>
            <person name="Jiang B."/>
            <person name="Gentsch J.R."/>
            <person name="Tsunemitsu H."/>
            <person name="Saif L.J."/>
            <person name="Glass R.I."/>
        </authorList>
    </citation>
    <scope>NUCLEOTIDE SEQUENCE [GENOMIC DNA]</scope>
</reference>
<proteinExistence type="inferred from homology"/>
<accession>Q65525</accession>
<sequence length="733" mass="82495">MASSLYRQLISQNYYSTGNEILLDQQTNKTTVDYVDAGNYTYAQLPPTTWGAESTYESAFSAPEITGPYTNTVIKLSDLSDSNVWVLYQKPTSTVKLLKNGPESYSWNLAAFELWYGKANTTVTSDYYSGMTNSEKSVEVDHDSLVLFWNEGSTALSNKVINFSWNVGGVLIKLTSNTRIDICMANMDNFTSDSFNWEEWTHNFPRSASMNIYTDYYLASVDPYSQIRALQQPIITTVEMKMVKVKREGSINVDEVVSKDSLWQEVRYVRDITLQCKIESEVVKGGGWGYDYTSVAFKTINHTYSYTRAGEAVNAHVTISFNNLKERSYGGSLPTDFKIGRFDIIDVDTYMYIDYWDDSEIFKNMVYVRDLRADMGGFNYSSAMSYYFRIPVGQYPGLHSSGVRFTYERSLLSQQFTDQVALNSMRFVFRATSSDGWFMTAGNINARRIASGTGFAYSDGYVTETVGTVSFISLIPSNPNYQTPIASSSTVRMDLERKINDLRNDFNELASSVALGDILSLAMSPLTFANLLESVPAIASSVKDVAANVMKKFKTTKMFKKAAKPKYKEYIIGDLLEDVTNLPRSTTAMDFDDITSAVMVSTTNRLQLTDVETLSEIVARSADDFIPNRAYRMIEDGMVHEATPNGVFSYDLATLQQRNFDMEKFMQLASKSPVISAIVDFATLKAMRDTYGVSTDIMYKLVASDAPTIVSFINNNNPLIRNRIEGLLRQCRI</sequence>
<protein>
    <recommendedName>
        <fullName evidence="2">Outer capsid protein VP4</fullName>
    </recommendedName>
    <alternativeName>
        <fullName evidence="2">Hemagglutinin</fullName>
    </alternativeName>
    <component>
        <recommendedName>
            <fullName evidence="2">Outer capsid protein VP8*</fullName>
        </recommendedName>
    </component>
    <component>
        <recommendedName>
            <fullName evidence="2">Outer capsid protein VP5*</fullName>
        </recommendedName>
    </component>
</protein>
<organism>
    <name type="scientific">Rotavirus C (isolate RVC/Cow/Japan/Shintoku/1991/G2P[3])</name>
    <name type="common">RV-C</name>
    <dbReference type="NCBI Taxonomy" id="33723"/>
    <lineage>
        <taxon>Viruses</taxon>
        <taxon>Riboviria</taxon>
        <taxon>Orthornavirae</taxon>
        <taxon>Duplornaviricota</taxon>
        <taxon>Resentoviricetes</taxon>
        <taxon>Reovirales</taxon>
        <taxon>Sedoreoviridae</taxon>
        <taxon>Rotavirus</taxon>
        <taxon>Rotavirus C</taxon>
    </lineage>
</organism>
<feature type="chain" id="PRO_0000369873" description="Outer capsid protein VP4" evidence="2">
    <location>
        <begin position="1"/>
        <end position="733"/>
    </location>
</feature>
<feature type="chain" id="PRO_0000369874" description="Outer capsid protein VP8*" evidence="2">
    <location>
        <begin position="1"/>
        <end position="228"/>
    </location>
</feature>
<feature type="chain" id="PRO_0000369875" description="Outer capsid protein VP5*" evidence="1 2">
    <location>
        <begin position="229"/>
        <end position="733"/>
    </location>
</feature>
<feature type="coiled-coil region" evidence="2">
    <location>
        <begin position="492"/>
        <end position="512"/>
    </location>
</feature>
<feature type="site" description="Cleavage" evidence="2">
    <location>
        <begin position="228"/>
        <end position="229"/>
    </location>
</feature>
<feature type="site" description="Cleavage" evidence="2">
    <location>
        <begin position="244"/>
        <end position="245"/>
    </location>
</feature>